<comment type="function">
    <text evidence="1">Endonuclease that specifically degrades the RNA of RNA-DNA hybrids.</text>
</comment>
<comment type="catalytic activity">
    <reaction evidence="1">
        <text>Endonucleolytic cleavage to 5'-phosphomonoester.</text>
        <dbReference type="EC" id="3.1.26.4"/>
    </reaction>
</comment>
<comment type="cofactor">
    <cofactor evidence="1">
        <name>Mn(2+)</name>
        <dbReference type="ChEBI" id="CHEBI:29035"/>
    </cofactor>
    <cofactor evidence="1">
        <name>Mg(2+)</name>
        <dbReference type="ChEBI" id="CHEBI:18420"/>
    </cofactor>
    <text evidence="1">Manganese or magnesium. Binds 1 divalent metal ion per monomer in the absence of substrate. May bind a second metal ion after substrate binding.</text>
</comment>
<comment type="subcellular location">
    <subcellularLocation>
        <location evidence="1">Cytoplasm</location>
    </subcellularLocation>
</comment>
<comment type="similarity">
    <text evidence="1">Belongs to the RNase HII family.</text>
</comment>
<organism>
    <name type="scientific">Granulibacter bethesdensis (strain ATCC BAA-1260 / CGDNIH1)</name>
    <dbReference type="NCBI Taxonomy" id="391165"/>
    <lineage>
        <taxon>Bacteria</taxon>
        <taxon>Pseudomonadati</taxon>
        <taxon>Pseudomonadota</taxon>
        <taxon>Alphaproteobacteria</taxon>
        <taxon>Acetobacterales</taxon>
        <taxon>Acetobacteraceae</taxon>
        <taxon>Granulibacter</taxon>
    </lineage>
</organism>
<keyword id="KW-0963">Cytoplasm</keyword>
<keyword id="KW-0255">Endonuclease</keyword>
<keyword id="KW-0378">Hydrolase</keyword>
<keyword id="KW-0464">Manganese</keyword>
<keyword id="KW-0479">Metal-binding</keyword>
<keyword id="KW-0540">Nuclease</keyword>
<keyword id="KW-1185">Reference proteome</keyword>
<evidence type="ECO:0000255" key="1">
    <source>
        <dbReference type="HAMAP-Rule" id="MF_00052"/>
    </source>
</evidence>
<evidence type="ECO:0000255" key="2">
    <source>
        <dbReference type="PROSITE-ProRule" id="PRU01319"/>
    </source>
</evidence>
<reference key="1">
    <citation type="journal article" date="2007" name="J. Bacteriol.">
        <title>Genome sequence analysis of the emerging human pathogenic acetic acid bacterium Granulibacter bethesdensis.</title>
        <authorList>
            <person name="Greenberg D.E."/>
            <person name="Porcella S.F."/>
            <person name="Zelazny A.M."/>
            <person name="Virtaneva K."/>
            <person name="Sturdevant D.E."/>
            <person name="Kupko J.J. III"/>
            <person name="Barbian K.D."/>
            <person name="Babar A."/>
            <person name="Dorward D.W."/>
            <person name="Holland S.M."/>
        </authorList>
    </citation>
    <scope>NUCLEOTIDE SEQUENCE [LARGE SCALE GENOMIC DNA]</scope>
    <source>
        <strain>ATCC BAA-1260 / CGDNIH1</strain>
    </source>
</reference>
<gene>
    <name evidence="1" type="primary">rnhB</name>
    <name type="ordered locus">GbCGDNIH1_1858</name>
</gene>
<sequence>MQGAERGRMQMPDDRLEREAGGLVAGVDEVGRGPLAGPVVAAAVLLPASGFPAHLAGLIDDSKKLDAAARDRAFAALLAEPGITIGIGAASVTEIGRLNILHASMLAMRRAVERLPTIPDLALVDGNRAPALPCAARCVVGGDAKCLSIAAASIIAKVVRDRAMARLARRYPVYGWERNAGYPTPAHRAGLTEFGPTPHHRTAFGLVRQLLAMRMEAVV</sequence>
<dbReference type="EC" id="3.1.26.4" evidence="1"/>
<dbReference type="EMBL" id="CP000394">
    <property type="protein sequence ID" value="ABI62756.1"/>
    <property type="molecule type" value="Genomic_DNA"/>
</dbReference>
<dbReference type="SMR" id="Q0BQZ6"/>
<dbReference type="STRING" id="391165.GbCGDNIH1_1858"/>
<dbReference type="KEGG" id="gbe:GbCGDNIH1_1858"/>
<dbReference type="eggNOG" id="COG0164">
    <property type="taxonomic scope" value="Bacteria"/>
</dbReference>
<dbReference type="HOGENOM" id="CLU_036532_3_2_5"/>
<dbReference type="Proteomes" id="UP000001963">
    <property type="component" value="Chromosome"/>
</dbReference>
<dbReference type="GO" id="GO:0005737">
    <property type="term" value="C:cytoplasm"/>
    <property type="evidence" value="ECO:0007669"/>
    <property type="project" value="UniProtKB-SubCell"/>
</dbReference>
<dbReference type="GO" id="GO:0032299">
    <property type="term" value="C:ribonuclease H2 complex"/>
    <property type="evidence" value="ECO:0007669"/>
    <property type="project" value="TreeGrafter"/>
</dbReference>
<dbReference type="GO" id="GO:0030145">
    <property type="term" value="F:manganese ion binding"/>
    <property type="evidence" value="ECO:0007669"/>
    <property type="project" value="UniProtKB-UniRule"/>
</dbReference>
<dbReference type="GO" id="GO:0003723">
    <property type="term" value="F:RNA binding"/>
    <property type="evidence" value="ECO:0007669"/>
    <property type="project" value="InterPro"/>
</dbReference>
<dbReference type="GO" id="GO:0004523">
    <property type="term" value="F:RNA-DNA hybrid ribonuclease activity"/>
    <property type="evidence" value="ECO:0007669"/>
    <property type="project" value="UniProtKB-UniRule"/>
</dbReference>
<dbReference type="GO" id="GO:0043137">
    <property type="term" value="P:DNA replication, removal of RNA primer"/>
    <property type="evidence" value="ECO:0007669"/>
    <property type="project" value="TreeGrafter"/>
</dbReference>
<dbReference type="GO" id="GO:0006298">
    <property type="term" value="P:mismatch repair"/>
    <property type="evidence" value="ECO:0007669"/>
    <property type="project" value="TreeGrafter"/>
</dbReference>
<dbReference type="CDD" id="cd07182">
    <property type="entry name" value="RNase_HII_bacteria_HII_like"/>
    <property type="match status" value="1"/>
</dbReference>
<dbReference type="Gene3D" id="3.30.420.10">
    <property type="entry name" value="Ribonuclease H-like superfamily/Ribonuclease H"/>
    <property type="match status" value="1"/>
</dbReference>
<dbReference type="HAMAP" id="MF_00052_B">
    <property type="entry name" value="RNase_HII_B"/>
    <property type="match status" value="1"/>
</dbReference>
<dbReference type="InterPro" id="IPR022898">
    <property type="entry name" value="RNase_HII"/>
</dbReference>
<dbReference type="InterPro" id="IPR001352">
    <property type="entry name" value="RNase_HII/HIII"/>
</dbReference>
<dbReference type="InterPro" id="IPR024567">
    <property type="entry name" value="RNase_HII/HIII_dom"/>
</dbReference>
<dbReference type="InterPro" id="IPR012337">
    <property type="entry name" value="RNaseH-like_sf"/>
</dbReference>
<dbReference type="InterPro" id="IPR036397">
    <property type="entry name" value="RNaseH_sf"/>
</dbReference>
<dbReference type="NCBIfam" id="NF000595">
    <property type="entry name" value="PRK00015.1-3"/>
    <property type="match status" value="1"/>
</dbReference>
<dbReference type="PANTHER" id="PTHR10954">
    <property type="entry name" value="RIBONUCLEASE H2 SUBUNIT A"/>
    <property type="match status" value="1"/>
</dbReference>
<dbReference type="PANTHER" id="PTHR10954:SF18">
    <property type="entry name" value="RIBONUCLEASE HII"/>
    <property type="match status" value="1"/>
</dbReference>
<dbReference type="Pfam" id="PF01351">
    <property type="entry name" value="RNase_HII"/>
    <property type="match status" value="1"/>
</dbReference>
<dbReference type="SUPFAM" id="SSF53098">
    <property type="entry name" value="Ribonuclease H-like"/>
    <property type="match status" value="1"/>
</dbReference>
<dbReference type="PROSITE" id="PS51975">
    <property type="entry name" value="RNASE_H_2"/>
    <property type="match status" value="1"/>
</dbReference>
<protein>
    <recommendedName>
        <fullName evidence="1">Ribonuclease HII</fullName>
        <shortName evidence="1">RNase HII</shortName>
        <ecNumber evidence="1">3.1.26.4</ecNumber>
    </recommendedName>
</protein>
<name>RNH2_GRABC</name>
<feature type="chain" id="PRO_0000334902" description="Ribonuclease HII">
    <location>
        <begin position="1"/>
        <end position="219"/>
    </location>
</feature>
<feature type="domain" description="RNase H type-2" evidence="2">
    <location>
        <begin position="22"/>
        <end position="219"/>
    </location>
</feature>
<feature type="binding site" evidence="1">
    <location>
        <position position="28"/>
    </location>
    <ligand>
        <name>a divalent metal cation</name>
        <dbReference type="ChEBI" id="CHEBI:60240"/>
    </ligand>
</feature>
<feature type="binding site" evidence="1">
    <location>
        <position position="29"/>
    </location>
    <ligand>
        <name>a divalent metal cation</name>
        <dbReference type="ChEBI" id="CHEBI:60240"/>
    </ligand>
</feature>
<feature type="binding site" evidence="1">
    <location>
        <position position="125"/>
    </location>
    <ligand>
        <name>a divalent metal cation</name>
        <dbReference type="ChEBI" id="CHEBI:60240"/>
    </ligand>
</feature>
<accession>Q0BQZ6</accession>
<proteinExistence type="inferred from homology"/>